<reference key="1">
    <citation type="submission" date="2006-08" db="EMBL/GenBank/DDBJ databases">
        <title>Complete sequence of Maricaulis maris MCS10.</title>
        <authorList>
            <consortium name="US DOE Joint Genome Institute"/>
            <person name="Copeland A."/>
            <person name="Lucas S."/>
            <person name="Lapidus A."/>
            <person name="Barry K."/>
            <person name="Detter J.C."/>
            <person name="Glavina del Rio T."/>
            <person name="Hammon N."/>
            <person name="Israni S."/>
            <person name="Dalin E."/>
            <person name="Tice H."/>
            <person name="Pitluck S."/>
            <person name="Saunders E."/>
            <person name="Brettin T."/>
            <person name="Bruce D."/>
            <person name="Han C."/>
            <person name="Tapia R."/>
            <person name="Gilna P."/>
            <person name="Schmutz J."/>
            <person name="Larimer F."/>
            <person name="Land M."/>
            <person name="Hauser L."/>
            <person name="Kyrpides N."/>
            <person name="Mikhailova N."/>
            <person name="Viollier P."/>
            <person name="Stephens C."/>
            <person name="Richardson P."/>
        </authorList>
    </citation>
    <scope>NUCLEOTIDE SEQUENCE [LARGE SCALE GENOMIC DNA]</scope>
    <source>
        <strain>MCS10</strain>
    </source>
</reference>
<proteinExistence type="inferred from homology"/>
<sequence>MRYLPHTDTDRKAMLDAIGVASIDDLFTDVPEAARLDGLIDLPTKQTELQVERALAAMSSRNVAASHAPFFVGAGAYKHHVPATVDHLIQRSEFLTAYTPYQPEISQGTLQTLFEFQTQVALLTGMDVANASMYDGSTACAEAVMMAARVTRRTKAVMAGSVHPHYVEASQTLAKYSDVSISVTDAAPADLDAVIAEIDDTTACVVIQTPDIFGRLHDLREVSRIAHEKGALVIAVFTEAVSLGLVEAPGHMGADIAVGEGQSIGVGLNFGGPYVGLFACKDDRRFIRQMPGRLAGETIDADGRRGYVLTLSTREQHIRRDKATSNICTNAGLCSLAWTIHMTLLGEKGLTQLARLNHETACELADALSAVPGVELVNETFFNEFTILLPKNADQVVNDLARFGVLGGVPASRLYPGRFENYLIIAATETNTPEDIAVFAKALAGVL</sequence>
<name>GCSPA_MARMM</name>
<dbReference type="EC" id="1.4.4.2" evidence="1"/>
<dbReference type="EMBL" id="CP000449">
    <property type="protein sequence ID" value="ABI66501.1"/>
    <property type="molecule type" value="Genomic_DNA"/>
</dbReference>
<dbReference type="RefSeq" id="WP_011644146.1">
    <property type="nucleotide sequence ID" value="NC_008347.1"/>
</dbReference>
<dbReference type="SMR" id="Q0AMJ2"/>
<dbReference type="STRING" id="394221.Mmar10_2209"/>
<dbReference type="KEGG" id="mmr:Mmar10_2209"/>
<dbReference type="eggNOG" id="COG0403">
    <property type="taxonomic scope" value="Bacteria"/>
</dbReference>
<dbReference type="HOGENOM" id="CLU_004620_0_2_5"/>
<dbReference type="OrthoDB" id="9801272at2"/>
<dbReference type="Proteomes" id="UP000001964">
    <property type="component" value="Chromosome"/>
</dbReference>
<dbReference type="GO" id="GO:0004375">
    <property type="term" value="F:glycine dehydrogenase (decarboxylating) activity"/>
    <property type="evidence" value="ECO:0007669"/>
    <property type="project" value="UniProtKB-EC"/>
</dbReference>
<dbReference type="GO" id="GO:0019464">
    <property type="term" value="P:glycine decarboxylation via glycine cleavage system"/>
    <property type="evidence" value="ECO:0007669"/>
    <property type="project" value="UniProtKB-UniRule"/>
</dbReference>
<dbReference type="GO" id="GO:0009116">
    <property type="term" value="P:nucleoside metabolic process"/>
    <property type="evidence" value="ECO:0007669"/>
    <property type="project" value="InterPro"/>
</dbReference>
<dbReference type="CDD" id="cd00613">
    <property type="entry name" value="GDC-P"/>
    <property type="match status" value="1"/>
</dbReference>
<dbReference type="Gene3D" id="3.90.1150.10">
    <property type="entry name" value="Aspartate Aminotransferase, domain 1"/>
    <property type="match status" value="1"/>
</dbReference>
<dbReference type="Gene3D" id="3.40.640.10">
    <property type="entry name" value="Type I PLP-dependent aspartate aminotransferase-like (Major domain)"/>
    <property type="match status" value="1"/>
</dbReference>
<dbReference type="HAMAP" id="MF_00712">
    <property type="entry name" value="GcvPA"/>
    <property type="match status" value="1"/>
</dbReference>
<dbReference type="InterPro" id="IPR023010">
    <property type="entry name" value="GcvPA"/>
</dbReference>
<dbReference type="InterPro" id="IPR049315">
    <property type="entry name" value="GDC-P_N"/>
</dbReference>
<dbReference type="InterPro" id="IPR020581">
    <property type="entry name" value="GDC_P"/>
</dbReference>
<dbReference type="InterPro" id="IPR015424">
    <property type="entry name" value="PyrdxlP-dep_Trfase"/>
</dbReference>
<dbReference type="InterPro" id="IPR015421">
    <property type="entry name" value="PyrdxlP-dep_Trfase_major"/>
</dbReference>
<dbReference type="InterPro" id="IPR015422">
    <property type="entry name" value="PyrdxlP-dep_Trfase_small"/>
</dbReference>
<dbReference type="NCBIfam" id="NF001696">
    <property type="entry name" value="PRK00451.1"/>
    <property type="match status" value="1"/>
</dbReference>
<dbReference type="PANTHER" id="PTHR42806">
    <property type="entry name" value="GLYCINE CLEAVAGE SYSTEM P-PROTEIN"/>
    <property type="match status" value="1"/>
</dbReference>
<dbReference type="PANTHER" id="PTHR42806:SF1">
    <property type="entry name" value="GLYCINE DEHYDROGENASE (DECARBOXYLATING)"/>
    <property type="match status" value="1"/>
</dbReference>
<dbReference type="Pfam" id="PF02347">
    <property type="entry name" value="GDC-P"/>
    <property type="match status" value="1"/>
</dbReference>
<dbReference type="PIRSF" id="PIRSF006815">
    <property type="entry name" value="GcvPA"/>
    <property type="match status" value="1"/>
</dbReference>
<dbReference type="SUPFAM" id="SSF53383">
    <property type="entry name" value="PLP-dependent transferases"/>
    <property type="match status" value="1"/>
</dbReference>
<feature type="chain" id="PRO_1000045667" description="Probable glycine dehydrogenase (decarboxylating) subunit 1">
    <location>
        <begin position="1"/>
        <end position="447"/>
    </location>
</feature>
<keyword id="KW-0560">Oxidoreductase</keyword>
<keyword id="KW-1185">Reference proteome</keyword>
<comment type="function">
    <text evidence="1">The glycine cleavage system catalyzes the degradation of glycine. The P protein binds the alpha-amino group of glycine through its pyridoxal phosphate cofactor; CO(2) is released and the remaining methylamine moiety is then transferred to the lipoamide cofactor of the H protein.</text>
</comment>
<comment type="catalytic activity">
    <reaction evidence="1">
        <text>N(6)-[(R)-lipoyl]-L-lysyl-[glycine-cleavage complex H protein] + glycine + H(+) = N(6)-[(R)-S(8)-aminomethyldihydrolipoyl]-L-lysyl-[glycine-cleavage complex H protein] + CO2</text>
        <dbReference type="Rhea" id="RHEA:24304"/>
        <dbReference type="Rhea" id="RHEA-COMP:10494"/>
        <dbReference type="Rhea" id="RHEA-COMP:10495"/>
        <dbReference type="ChEBI" id="CHEBI:15378"/>
        <dbReference type="ChEBI" id="CHEBI:16526"/>
        <dbReference type="ChEBI" id="CHEBI:57305"/>
        <dbReference type="ChEBI" id="CHEBI:83099"/>
        <dbReference type="ChEBI" id="CHEBI:83143"/>
        <dbReference type="EC" id="1.4.4.2"/>
    </reaction>
</comment>
<comment type="subunit">
    <text evidence="1">The glycine cleavage system is composed of four proteins: P, T, L and H. In this organism, the P 'protein' is a heterodimer of two subunits.</text>
</comment>
<comment type="similarity">
    <text evidence="1">Belongs to the GcvP family. N-terminal subunit subfamily.</text>
</comment>
<protein>
    <recommendedName>
        <fullName evidence="1">Probable glycine dehydrogenase (decarboxylating) subunit 1</fullName>
        <ecNumber evidence="1">1.4.4.2</ecNumber>
    </recommendedName>
    <alternativeName>
        <fullName evidence="1">Glycine cleavage system P-protein subunit 1</fullName>
    </alternativeName>
    <alternativeName>
        <fullName evidence="1">Glycine decarboxylase subunit 1</fullName>
    </alternativeName>
    <alternativeName>
        <fullName evidence="1">Glycine dehydrogenase (aminomethyl-transferring) subunit 1</fullName>
    </alternativeName>
</protein>
<evidence type="ECO:0000255" key="1">
    <source>
        <dbReference type="HAMAP-Rule" id="MF_00712"/>
    </source>
</evidence>
<organism>
    <name type="scientific">Maricaulis maris (strain MCS10)</name>
    <name type="common">Caulobacter maris</name>
    <dbReference type="NCBI Taxonomy" id="394221"/>
    <lineage>
        <taxon>Bacteria</taxon>
        <taxon>Pseudomonadati</taxon>
        <taxon>Pseudomonadota</taxon>
        <taxon>Alphaproteobacteria</taxon>
        <taxon>Maricaulales</taxon>
        <taxon>Maricaulaceae</taxon>
        <taxon>Maricaulis</taxon>
    </lineage>
</organism>
<accession>Q0AMJ2</accession>
<gene>
    <name evidence="1" type="primary">gcvPA</name>
    <name type="ordered locus">Mmar10_2209</name>
</gene>